<dbReference type="EMBL" id="AE007317">
    <property type="protein sequence ID" value="AAK99814.1"/>
    <property type="molecule type" value="Genomic_DNA"/>
</dbReference>
<dbReference type="PIR" id="B97998">
    <property type="entry name" value="B97998"/>
</dbReference>
<dbReference type="RefSeq" id="NP_358604.1">
    <property type="nucleotide sequence ID" value="NC_003098.1"/>
</dbReference>
<dbReference type="RefSeq" id="WP_000981526.1">
    <property type="nucleotide sequence ID" value="NC_003098.1"/>
</dbReference>
<dbReference type="SMR" id="P67267"/>
<dbReference type="STRING" id="171101.spr1010"/>
<dbReference type="KEGG" id="spr:spr1010"/>
<dbReference type="PATRIC" id="fig|171101.6.peg.1099"/>
<dbReference type="eggNOG" id="COG0718">
    <property type="taxonomic scope" value="Bacteria"/>
</dbReference>
<dbReference type="HOGENOM" id="CLU_140930_1_1_9"/>
<dbReference type="PHI-base" id="PHI:3159"/>
<dbReference type="Proteomes" id="UP000000586">
    <property type="component" value="Chromosome"/>
</dbReference>
<dbReference type="GO" id="GO:0043590">
    <property type="term" value="C:bacterial nucleoid"/>
    <property type="evidence" value="ECO:0007669"/>
    <property type="project" value="UniProtKB-UniRule"/>
</dbReference>
<dbReference type="GO" id="GO:0005829">
    <property type="term" value="C:cytosol"/>
    <property type="evidence" value="ECO:0000318"/>
    <property type="project" value="GO_Central"/>
</dbReference>
<dbReference type="GO" id="GO:0003677">
    <property type="term" value="F:DNA binding"/>
    <property type="evidence" value="ECO:0000318"/>
    <property type="project" value="GO_Central"/>
</dbReference>
<dbReference type="FunFam" id="3.30.1310.10:FF:000005">
    <property type="entry name" value="Nucleoid-associated protein SPAR113_1167"/>
    <property type="match status" value="1"/>
</dbReference>
<dbReference type="Gene3D" id="3.30.1310.10">
    <property type="entry name" value="Nucleoid-associated protein YbaB-like domain"/>
    <property type="match status" value="1"/>
</dbReference>
<dbReference type="HAMAP" id="MF_00274">
    <property type="entry name" value="DNA_YbaB_EbfC"/>
    <property type="match status" value="1"/>
</dbReference>
<dbReference type="InterPro" id="IPR036894">
    <property type="entry name" value="YbaB-like_sf"/>
</dbReference>
<dbReference type="InterPro" id="IPR004401">
    <property type="entry name" value="YbaB/EbfC"/>
</dbReference>
<dbReference type="NCBIfam" id="TIGR00103">
    <property type="entry name" value="DNA_YbaB_EbfC"/>
    <property type="match status" value="1"/>
</dbReference>
<dbReference type="PANTHER" id="PTHR33449">
    <property type="entry name" value="NUCLEOID-ASSOCIATED PROTEIN YBAB"/>
    <property type="match status" value="1"/>
</dbReference>
<dbReference type="PANTHER" id="PTHR33449:SF1">
    <property type="entry name" value="NUCLEOID-ASSOCIATED PROTEIN YBAB"/>
    <property type="match status" value="1"/>
</dbReference>
<dbReference type="Pfam" id="PF02575">
    <property type="entry name" value="YbaB_DNA_bd"/>
    <property type="match status" value="1"/>
</dbReference>
<dbReference type="PIRSF" id="PIRSF004555">
    <property type="entry name" value="UCP004555"/>
    <property type="match status" value="1"/>
</dbReference>
<dbReference type="SUPFAM" id="SSF82607">
    <property type="entry name" value="YbaB-like"/>
    <property type="match status" value="1"/>
</dbReference>
<evidence type="ECO:0000255" key="1">
    <source>
        <dbReference type="HAMAP-Rule" id="MF_00274"/>
    </source>
</evidence>
<reference key="1">
    <citation type="journal article" date="2001" name="J. Bacteriol.">
        <title>Genome of the bacterium Streptococcus pneumoniae strain R6.</title>
        <authorList>
            <person name="Hoskins J."/>
            <person name="Alborn W.E. Jr."/>
            <person name="Arnold J."/>
            <person name="Blaszczak L.C."/>
            <person name="Burgett S."/>
            <person name="DeHoff B.S."/>
            <person name="Estrem S.T."/>
            <person name="Fritz L."/>
            <person name="Fu D.-J."/>
            <person name="Fuller W."/>
            <person name="Geringer C."/>
            <person name="Gilmour R."/>
            <person name="Glass J.S."/>
            <person name="Khoja H."/>
            <person name="Kraft A.R."/>
            <person name="Lagace R.E."/>
            <person name="LeBlanc D.J."/>
            <person name="Lee L.N."/>
            <person name="Lefkowitz E.J."/>
            <person name="Lu J."/>
            <person name="Matsushima P."/>
            <person name="McAhren S.M."/>
            <person name="McHenney M."/>
            <person name="McLeaster K."/>
            <person name="Mundy C.W."/>
            <person name="Nicas T.I."/>
            <person name="Norris F.H."/>
            <person name="O'Gara M."/>
            <person name="Peery R.B."/>
            <person name="Robertson G.T."/>
            <person name="Rockey P."/>
            <person name="Sun P.-M."/>
            <person name="Winkler M.E."/>
            <person name="Yang Y."/>
            <person name="Young-Bellido M."/>
            <person name="Zhao G."/>
            <person name="Zook C.A."/>
            <person name="Baltz R.H."/>
            <person name="Jaskunas S.R."/>
            <person name="Rosteck P.R. Jr."/>
            <person name="Skatrud P.L."/>
            <person name="Glass J.I."/>
        </authorList>
    </citation>
    <scope>NUCLEOTIDE SEQUENCE [LARGE SCALE GENOMIC DNA]</scope>
    <source>
        <strain>ATCC BAA-255 / R6</strain>
    </source>
</reference>
<accession>P67267</accession>
<accession>Q97QU7</accession>
<gene>
    <name type="ordered locus">spr1010</name>
</gene>
<proteinExistence type="inferred from homology"/>
<organism>
    <name type="scientific">Streptococcus pneumoniae (strain ATCC BAA-255 / R6)</name>
    <dbReference type="NCBI Taxonomy" id="171101"/>
    <lineage>
        <taxon>Bacteria</taxon>
        <taxon>Bacillati</taxon>
        <taxon>Bacillota</taxon>
        <taxon>Bacilli</taxon>
        <taxon>Lactobacillales</taxon>
        <taxon>Streptococcaceae</taxon>
        <taxon>Streptococcus</taxon>
    </lineage>
</organism>
<protein>
    <recommendedName>
        <fullName evidence="1">Nucleoid-associated protein spr1010</fullName>
    </recommendedName>
</protein>
<keyword id="KW-0963">Cytoplasm</keyword>
<keyword id="KW-0238">DNA-binding</keyword>
<keyword id="KW-1185">Reference proteome</keyword>
<comment type="function">
    <text evidence="1">Binds to DNA and alters its conformation. May be involved in regulation of gene expression, nucleoid organization and DNA protection.</text>
</comment>
<comment type="subunit">
    <text evidence="1">Homodimer.</text>
</comment>
<comment type="subcellular location">
    <subcellularLocation>
        <location evidence="1">Cytoplasm</location>
        <location evidence="1">Nucleoid</location>
    </subcellularLocation>
</comment>
<comment type="similarity">
    <text evidence="1">Belongs to the YbaB/EbfC family.</text>
</comment>
<feature type="chain" id="PRO_0000170449" description="Nucleoid-associated protein spr1010">
    <location>
        <begin position="1"/>
        <end position="99"/>
    </location>
</feature>
<name>Y1010_STRR6</name>
<sequence>MMNMQNMMRQAQKLQKQMEQSQAELAAMQFVGKSAQDLVQATLTGDKKVVSIDFNPAVVDPEDLETLSDMTVQAINSALEQIDETTKKKLGAFAGKLPF</sequence>